<dbReference type="EMBL" id="CP000803">
    <property type="protein sequence ID" value="ABU62390.1"/>
    <property type="molecule type" value="Genomic_DNA"/>
</dbReference>
<dbReference type="RefSeq" id="WP_003017352.1">
    <property type="nucleotide sequence ID" value="NC_009749.1"/>
</dbReference>
<dbReference type="SMR" id="A7NEI7"/>
<dbReference type="KEGG" id="fta:FTA_1915"/>
<dbReference type="HOGENOM" id="CLU_089475_5_0_6"/>
<dbReference type="GO" id="GO:0005829">
    <property type="term" value="C:cytosol"/>
    <property type="evidence" value="ECO:0007669"/>
    <property type="project" value="TreeGrafter"/>
</dbReference>
<dbReference type="GO" id="GO:0043024">
    <property type="term" value="F:ribosomal small subunit binding"/>
    <property type="evidence" value="ECO:0007669"/>
    <property type="project" value="TreeGrafter"/>
</dbReference>
<dbReference type="GO" id="GO:0030490">
    <property type="term" value="P:maturation of SSU-rRNA"/>
    <property type="evidence" value="ECO:0007669"/>
    <property type="project" value="UniProtKB-UniRule"/>
</dbReference>
<dbReference type="Gene3D" id="3.30.300.20">
    <property type="match status" value="1"/>
</dbReference>
<dbReference type="HAMAP" id="MF_00003">
    <property type="entry name" value="RbfA"/>
    <property type="match status" value="1"/>
</dbReference>
<dbReference type="InterPro" id="IPR015946">
    <property type="entry name" value="KH_dom-like_a/b"/>
</dbReference>
<dbReference type="InterPro" id="IPR000238">
    <property type="entry name" value="RbfA"/>
</dbReference>
<dbReference type="InterPro" id="IPR023799">
    <property type="entry name" value="RbfA_dom_sf"/>
</dbReference>
<dbReference type="InterPro" id="IPR020053">
    <property type="entry name" value="Ribosome-bd_factorA_CS"/>
</dbReference>
<dbReference type="NCBIfam" id="TIGR00082">
    <property type="entry name" value="rbfA"/>
    <property type="match status" value="1"/>
</dbReference>
<dbReference type="PANTHER" id="PTHR33515">
    <property type="entry name" value="RIBOSOME-BINDING FACTOR A, CHLOROPLASTIC-RELATED"/>
    <property type="match status" value="1"/>
</dbReference>
<dbReference type="PANTHER" id="PTHR33515:SF1">
    <property type="entry name" value="RIBOSOME-BINDING FACTOR A, CHLOROPLASTIC-RELATED"/>
    <property type="match status" value="1"/>
</dbReference>
<dbReference type="Pfam" id="PF02033">
    <property type="entry name" value="RBFA"/>
    <property type="match status" value="1"/>
</dbReference>
<dbReference type="SUPFAM" id="SSF89919">
    <property type="entry name" value="Ribosome-binding factor A, RbfA"/>
    <property type="match status" value="1"/>
</dbReference>
<dbReference type="PROSITE" id="PS01319">
    <property type="entry name" value="RBFA"/>
    <property type="match status" value="1"/>
</dbReference>
<name>RBFA_FRATF</name>
<keyword id="KW-0963">Cytoplasm</keyword>
<keyword id="KW-0690">Ribosome biogenesis</keyword>
<feature type="chain" id="PRO_1000000108" description="Ribosome-binding factor A">
    <location>
        <begin position="1"/>
        <end position="143"/>
    </location>
</feature>
<feature type="region of interest" description="Disordered" evidence="2">
    <location>
        <begin position="123"/>
        <end position="143"/>
    </location>
</feature>
<sequence>MAAEGRVQRVASEFQKVISLLLRTRIKDAKLASATITEVDLSKDLSYAKIYYTCLAIEDAEYIDKAFEKSKGFFRSSIAKSLSLRIVPNLKFIYDTSLDYGMQMEEKIQQALEADSKIIKQDDKSLQENYKQNDKETKAEKLR</sequence>
<reference key="1">
    <citation type="journal article" date="2009" name="PLoS ONE">
        <title>Complete genome sequence of Francisella tularensis subspecies holarctica FTNF002-00.</title>
        <authorList>
            <person name="Barabote R.D."/>
            <person name="Xie G."/>
            <person name="Brettin T.S."/>
            <person name="Hinrichs S.H."/>
            <person name="Fey P.D."/>
            <person name="Jay J.J."/>
            <person name="Engle J.L."/>
            <person name="Godbole S.D."/>
            <person name="Noronha J.M."/>
            <person name="Scheuermann R.H."/>
            <person name="Zhou L.W."/>
            <person name="Lion C."/>
            <person name="Dempsey M.P."/>
        </authorList>
    </citation>
    <scope>NUCLEOTIDE SEQUENCE [LARGE SCALE GENOMIC DNA]</scope>
    <source>
        <strain>FTNF002-00 / FTA</strain>
    </source>
</reference>
<proteinExistence type="inferred from homology"/>
<gene>
    <name evidence="1" type="primary">rbfA</name>
    <name type="ordered locus">FTA_1915</name>
</gene>
<comment type="function">
    <text evidence="1">One of several proteins that assist in the late maturation steps of the functional core of the 30S ribosomal subunit. Associates with free 30S ribosomal subunits (but not with 30S subunits that are part of 70S ribosomes or polysomes). Required for efficient processing of 16S rRNA. May interact with the 5'-terminal helix region of 16S rRNA.</text>
</comment>
<comment type="subunit">
    <text evidence="1">Monomer. Binds 30S ribosomal subunits, but not 50S ribosomal subunits or 70S ribosomes.</text>
</comment>
<comment type="subcellular location">
    <subcellularLocation>
        <location evidence="1">Cytoplasm</location>
    </subcellularLocation>
</comment>
<comment type="similarity">
    <text evidence="1">Belongs to the RbfA family.</text>
</comment>
<protein>
    <recommendedName>
        <fullName evidence="1">Ribosome-binding factor A</fullName>
    </recommendedName>
</protein>
<organism>
    <name type="scientific">Francisella tularensis subsp. holarctica (strain FTNF002-00 / FTA)</name>
    <dbReference type="NCBI Taxonomy" id="458234"/>
    <lineage>
        <taxon>Bacteria</taxon>
        <taxon>Pseudomonadati</taxon>
        <taxon>Pseudomonadota</taxon>
        <taxon>Gammaproteobacteria</taxon>
        <taxon>Thiotrichales</taxon>
        <taxon>Francisellaceae</taxon>
        <taxon>Francisella</taxon>
    </lineage>
</organism>
<evidence type="ECO:0000255" key="1">
    <source>
        <dbReference type="HAMAP-Rule" id="MF_00003"/>
    </source>
</evidence>
<evidence type="ECO:0000256" key="2">
    <source>
        <dbReference type="SAM" id="MobiDB-lite"/>
    </source>
</evidence>
<accession>A7NEI7</accession>